<dbReference type="EC" id="6.3.4.21" evidence="1"/>
<dbReference type="EMBL" id="BX897700">
    <property type="protein sequence ID" value="CAF25591.1"/>
    <property type="molecule type" value="Genomic_DNA"/>
</dbReference>
<dbReference type="RefSeq" id="WP_011178918.1">
    <property type="nucleotide sequence ID" value="NC_005955.1"/>
</dbReference>
<dbReference type="SMR" id="Q6G0X7"/>
<dbReference type="KEGG" id="bqu:BQ00840"/>
<dbReference type="eggNOG" id="COG1488">
    <property type="taxonomic scope" value="Bacteria"/>
</dbReference>
<dbReference type="HOGENOM" id="CLU_030991_1_0_5"/>
<dbReference type="OrthoDB" id="9771406at2"/>
<dbReference type="UniPathway" id="UPA00253">
    <property type="reaction ID" value="UER00457"/>
</dbReference>
<dbReference type="Proteomes" id="UP000000597">
    <property type="component" value="Chromosome"/>
</dbReference>
<dbReference type="GO" id="GO:0005829">
    <property type="term" value="C:cytosol"/>
    <property type="evidence" value="ECO:0007669"/>
    <property type="project" value="TreeGrafter"/>
</dbReference>
<dbReference type="GO" id="GO:0004516">
    <property type="term" value="F:nicotinate phosphoribosyltransferase activity"/>
    <property type="evidence" value="ECO:0007669"/>
    <property type="project" value="UniProtKB-UniRule"/>
</dbReference>
<dbReference type="GO" id="GO:0034355">
    <property type="term" value="P:NAD biosynthetic process via the salvage pathway"/>
    <property type="evidence" value="ECO:0007669"/>
    <property type="project" value="TreeGrafter"/>
</dbReference>
<dbReference type="Gene3D" id="3.20.140.10">
    <property type="entry name" value="nicotinate phosphoribosyltransferase"/>
    <property type="match status" value="1"/>
</dbReference>
<dbReference type="HAMAP" id="MF_00570">
    <property type="entry name" value="NAPRTase"/>
    <property type="match status" value="1"/>
</dbReference>
<dbReference type="InterPro" id="IPR041525">
    <property type="entry name" value="N/Namide_PRibTrfase"/>
</dbReference>
<dbReference type="InterPro" id="IPR040727">
    <property type="entry name" value="NAPRTase_N"/>
</dbReference>
<dbReference type="InterPro" id="IPR006406">
    <property type="entry name" value="Nic_PRibTrfase"/>
</dbReference>
<dbReference type="InterPro" id="IPR007229">
    <property type="entry name" value="Nic_PRibTrfase-Fam"/>
</dbReference>
<dbReference type="InterPro" id="IPR036068">
    <property type="entry name" value="Nicotinate_pribotase-like_C"/>
</dbReference>
<dbReference type="NCBIfam" id="TIGR01514">
    <property type="entry name" value="NAPRTase"/>
    <property type="match status" value="1"/>
</dbReference>
<dbReference type="NCBIfam" id="NF003704">
    <property type="entry name" value="PRK05321.1"/>
    <property type="match status" value="1"/>
</dbReference>
<dbReference type="PANTHER" id="PTHR11098">
    <property type="entry name" value="NICOTINATE PHOSPHORIBOSYLTRANSFERASE"/>
    <property type="match status" value="1"/>
</dbReference>
<dbReference type="PANTHER" id="PTHR11098:SF1">
    <property type="entry name" value="NICOTINATE PHOSPHORIBOSYLTRANSFERASE"/>
    <property type="match status" value="1"/>
</dbReference>
<dbReference type="Pfam" id="PF04095">
    <property type="entry name" value="NAPRTase"/>
    <property type="match status" value="1"/>
</dbReference>
<dbReference type="Pfam" id="PF17767">
    <property type="entry name" value="NAPRTase_N"/>
    <property type="match status" value="1"/>
</dbReference>
<dbReference type="PIRSF" id="PIRSF000484">
    <property type="entry name" value="NAPRT"/>
    <property type="match status" value="1"/>
</dbReference>
<dbReference type="SUPFAM" id="SSF51690">
    <property type="entry name" value="Nicotinate/Quinolinate PRTase C-terminal domain-like"/>
    <property type="match status" value="1"/>
</dbReference>
<dbReference type="SUPFAM" id="SSF54675">
    <property type="entry name" value="Nicotinate/Quinolinate PRTase N-terminal domain-like"/>
    <property type="match status" value="1"/>
</dbReference>
<evidence type="ECO:0000255" key="1">
    <source>
        <dbReference type="HAMAP-Rule" id="MF_00570"/>
    </source>
</evidence>
<organism>
    <name type="scientific">Bartonella quintana (strain Toulouse)</name>
    <name type="common">Rochalimaea quintana</name>
    <dbReference type="NCBI Taxonomy" id="283165"/>
    <lineage>
        <taxon>Bacteria</taxon>
        <taxon>Pseudomonadati</taxon>
        <taxon>Pseudomonadota</taxon>
        <taxon>Alphaproteobacteria</taxon>
        <taxon>Hyphomicrobiales</taxon>
        <taxon>Bartonellaceae</taxon>
        <taxon>Bartonella</taxon>
    </lineage>
</organism>
<accession>Q6G0X7</accession>
<gene>
    <name evidence="1" type="primary">pncB</name>
    <name type="ordered locus">BQ00840</name>
</gene>
<proteinExistence type="inferred from homology"/>
<comment type="function">
    <text evidence="1">Catalyzes the synthesis of beta-nicotinate D-ribonucleotide from nicotinate and 5-phospho-D-ribose 1-phosphate at the expense of ATP.</text>
</comment>
<comment type="catalytic activity">
    <reaction evidence="1">
        <text>nicotinate + 5-phospho-alpha-D-ribose 1-diphosphate + ATP + H2O = nicotinate beta-D-ribonucleotide + ADP + phosphate + diphosphate</text>
        <dbReference type="Rhea" id="RHEA:36163"/>
        <dbReference type="ChEBI" id="CHEBI:15377"/>
        <dbReference type="ChEBI" id="CHEBI:30616"/>
        <dbReference type="ChEBI" id="CHEBI:32544"/>
        <dbReference type="ChEBI" id="CHEBI:33019"/>
        <dbReference type="ChEBI" id="CHEBI:43474"/>
        <dbReference type="ChEBI" id="CHEBI:57502"/>
        <dbReference type="ChEBI" id="CHEBI:58017"/>
        <dbReference type="ChEBI" id="CHEBI:456216"/>
        <dbReference type="EC" id="6.3.4.21"/>
    </reaction>
</comment>
<comment type="pathway">
    <text evidence="1">Cofactor biosynthesis; NAD(+) biosynthesis; nicotinate D-ribonucleotide from nicotinate: step 1/1.</text>
</comment>
<comment type="PTM">
    <text evidence="1">Transiently phosphorylated on a His residue during the reaction cycle. Phosphorylation strongly increases the affinity for substrates and increases the rate of nicotinate D-ribonucleotide production. Dephosphorylation regenerates the low-affinity form of the enzyme, leading to product release.</text>
</comment>
<comment type="similarity">
    <text evidence="1">Belongs to the NAPRTase family.</text>
</comment>
<protein>
    <recommendedName>
        <fullName evidence="1">Nicotinate phosphoribosyltransferase</fullName>
        <shortName evidence="1">NAPRTase</shortName>
        <ecNumber evidence="1">6.3.4.21</ecNumber>
    </recommendedName>
</protein>
<name>PNCB_BARQU</name>
<reference key="1">
    <citation type="journal article" date="2004" name="Proc. Natl. Acad. Sci. U.S.A.">
        <title>The louse-borne human pathogen Bartonella quintana is a genomic derivative of the zoonotic agent Bartonella henselae.</title>
        <authorList>
            <person name="Alsmark U.C.M."/>
            <person name="Frank A.C."/>
            <person name="Karlberg E.O."/>
            <person name="Legault B.-A."/>
            <person name="Ardell D.H."/>
            <person name="Canbaeck B."/>
            <person name="Eriksson A.-S."/>
            <person name="Naeslund A.K."/>
            <person name="Handley S.A."/>
            <person name="Huvet M."/>
            <person name="La Scola B."/>
            <person name="Holmberg M."/>
            <person name="Andersson S.G.E."/>
        </authorList>
    </citation>
    <scope>NUCLEOTIDE SEQUENCE [LARGE SCALE GENOMIC DNA]</scope>
    <source>
        <strain>Toulouse</strain>
    </source>
</reference>
<keyword id="KW-0436">Ligase</keyword>
<keyword id="KW-0597">Phosphoprotein</keyword>
<keyword id="KW-0662">Pyridine nucleotide biosynthesis</keyword>
<feature type="chain" id="PRO_1000146830" description="Nicotinate phosphoribosyltransferase">
    <location>
        <begin position="1"/>
        <end position="434"/>
    </location>
</feature>
<feature type="modified residue" description="Phosphohistidine; by autocatalysis" evidence="1">
    <location>
        <position position="242"/>
    </location>
</feature>
<sequence length="434" mass="50232">MNHPDIAQRVYNHTWKLDPIIRSLLDTDFYKLLMLQMIWGLYPNVNVTFTLINRTKTIRLADDIDEGELRAQLDHALSLRFTKKEMIWLAGNTFYGRKQIFKPDFLHWLKNFQLPEYELTRKDGQYILHFHGPWSHSSMWEIPALAIISELRSRAAMKNLDRFALDVLYARAKAKMWSKVEQLKKLPDIKISDFGTRRRHSFLWQRWCVEALKEGIGDSFTGTSNVLLAMATDLEALGTNAHELPMVIAALTNNDNELCKAPYQVLQDWNRYYGGNLLIVLPDTFGTETFLRNAPDWVADWTGFRPDSAPPIEGGERIIQWWKEKGKDPREKLLIFSDALDVNTIEQTYHHFHGRVRMSFGWGTDLTNDFVGCAPQKIATFDALSLVCKVTHANGRPAVKLSDNPEKTIGDPREIQRYLNFFGNENFITRPINT</sequence>